<organism>
    <name type="scientific">Arabidopsis thaliana</name>
    <name type="common">Mouse-ear cress</name>
    <dbReference type="NCBI Taxonomy" id="3702"/>
    <lineage>
        <taxon>Eukaryota</taxon>
        <taxon>Viridiplantae</taxon>
        <taxon>Streptophyta</taxon>
        <taxon>Embryophyta</taxon>
        <taxon>Tracheophyta</taxon>
        <taxon>Spermatophyta</taxon>
        <taxon>Magnoliopsida</taxon>
        <taxon>eudicotyledons</taxon>
        <taxon>Gunneridae</taxon>
        <taxon>Pentapetalae</taxon>
        <taxon>rosids</taxon>
        <taxon>malvids</taxon>
        <taxon>Brassicales</taxon>
        <taxon>Brassicaceae</taxon>
        <taxon>Camelineae</taxon>
        <taxon>Arabidopsis</taxon>
    </lineage>
</organism>
<comment type="function">
    <text evidence="6">May be involved in the polar growth of plant cells via transportation of RNAs.</text>
</comment>
<comment type="subcellular location">
    <subcellularLocation>
        <location evidence="3">Nucleus</location>
    </subcellularLocation>
</comment>
<comment type="tissue specificity">
    <text evidence="3">Expressed in roots, leaves, stems, flowers and siliques.</text>
</comment>
<comment type="disruption phenotype">
    <text evidence="3">No visible phenotype under normal growth conditions.</text>
</comment>
<proteinExistence type="evidence at transcript level"/>
<keyword id="KW-0341">Growth regulation</keyword>
<keyword id="KW-0539">Nucleus</keyword>
<keyword id="KW-1185">Reference proteome</keyword>
<keyword id="KW-0813">Transport</keyword>
<name>DUF4_ARATH</name>
<gene>
    <name evidence="4" type="primary">DUF4</name>
    <name evidence="7" type="ordered locus">At2g46840</name>
</gene>
<dbReference type="EMBL" id="AC005310">
    <property type="protein sequence ID" value="AAC33501.1"/>
    <property type="molecule type" value="Genomic_DNA"/>
</dbReference>
<dbReference type="EMBL" id="CP002685">
    <property type="protein sequence ID" value="AEC10762.1"/>
    <property type="molecule type" value="Genomic_DNA"/>
</dbReference>
<dbReference type="PIR" id="T02685">
    <property type="entry name" value="T02685"/>
</dbReference>
<dbReference type="RefSeq" id="NP_182207.1">
    <property type="nucleotide sequence ID" value="NM_130251.2"/>
</dbReference>
<dbReference type="SMR" id="O81039"/>
<dbReference type="STRING" id="3702.O81039"/>
<dbReference type="PaxDb" id="3702-AT2G46840.1"/>
<dbReference type="EnsemblPlants" id="AT2G46840.1">
    <property type="protein sequence ID" value="AT2G46840.1"/>
    <property type="gene ID" value="AT2G46840"/>
</dbReference>
<dbReference type="GeneID" id="819297"/>
<dbReference type="Gramene" id="AT2G46840.1">
    <property type="protein sequence ID" value="AT2G46840.1"/>
    <property type="gene ID" value="AT2G46840"/>
</dbReference>
<dbReference type="KEGG" id="ath:AT2G46840"/>
<dbReference type="Araport" id="AT2G46840"/>
<dbReference type="TAIR" id="AT2G46840">
    <property type="gene designation" value="DUF4"/>
</dbReference>
<dbReference type="HOGENOM" id="CLU_1252156_0_0_1"/>
<dbReference type="InParanoid" id="O81039"/>
<dbReference type="OMA" id="AYSCELF"/>
<dbReference type="PhylomeDB" id="O81039"/>
<dbReference type="PRO" id="PR:O81039"/>
<dbReference type="Proteomes" id="UP000006548">
    <property type="component" value="Chromosome 2"/>
</dbReference>
<dbReference type="ExpressionAtlas" id="O81039">
    <property type="expression patterns" value="baseline and differential"/>
</dbReference>
<dbReference type="GO" id="GO:0005634">
    <property type="term" value="C:nucleus"/>
    <property type="evidence" value="ECO:0000314"/>
    <property type="project" value="TAIR"/>
</dbReference>
<dbReference type="InterPro" id="IPR007930">
    <property type="entry name" value="DUF724"/>
</dbReference>
<dbReference type="Pfam" id="PF05266">
    <property type="entry name" value="DUF724"/>
    <property type="match status" value="1"/>
</dbReference>
<feature type="chain" id="PRO_0000436422" description="DUF724 domain-containing protein 4">
    <location>
        <begin position="1"/>
        <end position="205"/>
    </location>
</feature>
<feature type="domain" description="DUF724" evidence="1">
    <location>
        <begin position="63"/>
        <end position="189"/>
    </location>
</feature>
<feature type="region of interest" description="Disordered" evidence="2">
    <location>
        <begin position="28"/>
        <end position="59"/>
    </location>
</feature>
<evidence type="ECO:0000255" key="1"/>
<evidence type="ECO:0000256" key="2">
    <source>
        <dbReference type="SAM" id="MobiDB-lite"/>
    </source>
</evidence>
<evidence type="ECO:0000269" key="3">
    <source>
    </source>
</evidence>
<evidence type="ECO:0000303" key="4">
    <source>
    </source>
</evidence>
<evidence type="ECO:0000305" key="5"/>
<evidence type="ECO:0000305" key="6">
    <source>
    </source>
</evidence>
<evidence type="ECO:0000312" key="7">
    <source>
        <dbReference type="Araport" id="AT2G46840"/>
    </source>
</evidence>
<reference key="1">
    <citation type="journal article" date="1999" name="Nature">
        <title>Sequence and analysis of chromosome 2 of the plant Arabidopsis thaliana.</title>
        <authorList>
            <person name="Lin X."/>
            <person name="Kaul S."/>
            <person name="Rounsley S.D."/>
            <person name="Shea T.P."/>
            <person name="Benito M.-I."/>
            <person name="Town C.D."/>
            <person name="Fujii C.Y."/>
            <person name="Mason T.M."/>
            <person name="Bowman C.L."/>
            <person name="Barnstead M.E."/>
            <person name="Feldblyum T.V."/>
            <person name="Buell C.R."/>
            <person name="Ketchum K.A."/>
            <person name="Lee J.J."/>
            <person name="Ronning C.M."/>
            <person name="Koo H.L."/>
            <person name="Moffat K.S."/>
            <person name="Cronin L.A."/>
            <person name="Shen M."/>
            <person name="Pai G."/>
            <person name="Van Aken S."/>
            <person name="Umayam L."/>
            <person name="Tallon L.J."/>
            <person name="Gill J.E."/>
            <person name="Adams M.D."/>
            <person name="Carrera A.J."/>
            <person name="Creasy T.H."/>
            <person name="Goodman H.M."/>
            <person name="Somerville C.R."/>
            <person name="Copenhaver G.P."/>
            <person name="Preuss D."/>
            <person name="Nierman W.C."/>
            <person name="White O."/>
            <person name="Eisen J.A."/>
            <person name="Salzberg S.L."/>
            <person name="Fraser C.M."/>
            <person name="Venter J.C."/>
        </authorList>
    </citation>
    <scope>NUCLEOTIDE SEQUENCE [LARGE SCALE GENOMIC DNA]</scope>
    <source>
        <strain>cv. Columbia</strain>
    </source>
</reference>
<reference key="2">
    <citation type="journal article" date="2017" name="Plant J.">
        <title>Araport11: a complete reannotation of the Arabidopsis thaliana reference genome.</title>
        <authorList>
            <person name="Cheng C.Y."/>
            <person name="Krishnakumar V."/>
            <person name="Chan A.P."/>
            <person name="Thibaud-Nissen F."/>
            <person name="Schobel S."/>
            <person name="Town C.D."/>
        </authorList>
    </citation>
    <scope>GENOME REANNOTATION</scope>
    <source>
        <strain>cv. Columbia</strain>
    </source>
</reference>
<reference key="3">
    <citation type="journal article" date="2010" name="Plant Mol. Biol.">
        <title>Characterization of DUF724 gene family in Arabidopsis thaliana.</title>
        <authorList>
            <person name="Cao X."/>
            <person name="Yang K.Z."/>
            <person name="Xia C."/>
            <person name="Zhang X.Q."/>
            <person name="Chen L.Q."/>
            <person name="Ye D."/>
        </authorList>
    </citation>
    <scope>FUNCTION</scope>
    <scope>GENE FAMILY</scope>
    <scope>NOMENCLATURE</scope>
    <scope>SUBCELLULAR LOCATION</scope>
    <scope>TISSUE SPECIFICITY</scope>
    <scope>DISRUPTION PHENOTYPE</scope>
</reference>
<protein>
    <recommendedName>
        <fullName evidence="5">DUF724 domain-containing protein 4</fullName>
        <shortName evidence="4">AtDUF4</shortName>
    </recommendedName>
</protein>
<accession>O81039</accession>
<sequence>MFLTNGSRAGPVKERGLLIIDADHPNYDASGRGKRRRVEQEHHSDLNNETAAPTGGSAGEEIVLPFTKTLASWKEFESDEVYKRTPQRPHFPSLAYTHPSFGEPTAAYLTAAFIDCVKTVDGMCEDTPKSELDVYRETFKMFEEQGFDVAEPLSQVLTLLVLRKMRRESLRQQKGMEKEMADDYSKLKKSLVRCKSSFEDKETAK</sequence>